<dbReference type="EMBL" id="AY651566">
    <property type="protein sequence ID" value="AAT73421.1"/>
    <property type="molecule type" value="Genomic_RNA"/>
</dbReference>
<dbReference type="SMR" id="Q6DP66"/>
<dbReference type="GO" id="GO:0030430">
    <property type="term" value="C:host cell cytoplasm"/>
    <property type="evidence" value="ECO:0007669"/>
    <property type="project" value="UniProtKB-SubCell"/>
</dbReference>
<dbReference type="GO" id="GO:0042025">
    <property type="term" value="C:host cell nucleus"/>
    <property type="evidence" value="ECO:0007669"/>
    <property type="project" value="UniProtKB-SubCell"/>
</dbReference>
<dbReference type="GO" id="GO:0030291">
    <property type="term" value="F:protein serine/threonine kinase inhibitor activity"/>
    <property type="evidence" value="ECO:0007669"/>
    <property type="project" value="UniProtKB-KW"/>
</dbReference>
<dbReference type="GO" id="GO:0003723">
    <property type="term" value="F:RNA binding"/>
    <property type="evidence" value="ECO:0007669"/>
    <property type="project" value="UniProtKB-KW"/>
</dbReference>
<dbReference type="GO" id="GO:0039540">
    <property type="term" value="P:symbiont-mediated suppression of host cytoplasmic pattern recognition receptor signaling pathway via inhibition of RIG-I activity"/>
    <property type="evidence" value="ECO:0007669"/>
    <property type="project" value="UniProtKB-KW"/>
</dbReference>
<dbReference type="GO" id="GO:0039657">
    <property type="term" value="P:symbiont-mediated suppression of host gene expression"/>
    <property type="evidence" value="ECO:0007669"/>
    <property type="project" value="UniProtKB-KW"/>
</dbReference>
<dbReference type="GO" id="GO:0039524">
    <property type="term" value="P:symbiont-mediated suppression of host mRNA processing"/>
    <property type="evidence" value="ECO:0007669"/>
    <property type="project" value="UniProtKB-KW"/>
</dbReference>
<dbReference type="GO" id="GO:0039580">
    <property type="term" value="P:symbiont-mediated suppression of host PKR/eIFalpha signaling"/>
    <property type="evidence" value="ECO:0007669"/>
    <property type="project" value="UniProtKB-KW"/>
</dbReference>
<dbReference type="GO" id="GO:0039502">
    <property type="term" value="P:symbiont-mediated suppression of host type I interferon-mediated signaling pathway"/>
    <property type="evidence" value="ECO:0007669"/>
    <property type="project" value="UniProtKB-KW"/>
</dbReference>
<dbReference type="FunFam" id="1.10.287.10:FF:000001">
    <property type="entry name" value="Non-structural protein 1"/>
    <property type="match status" value="1"/>
</dbReference>
<dbReference type="FunFam" id="3.30.420.330:FF:000001">
    <property type="entry name" value="Non-structural protein 1"/>
    <property type="match status" value="1"/>
</dbReference>
<dbReference type="Gene3D" id="3.30.420.330">
    <property type="entry name" value="Influenza virus non-structural protein, effector domain"/>
    <property type="match status" value="1"/>
</dbReference>
<dbReference type="Gene3D" id="1.10.287.10">
    <property type="entry name" value="S15/NS1, RNA-binding"/>
    <property type="match status" value="1"/>
</dbReference>
<dbReference type="HAMAP" id="MF_04066">
    <property type="entry name" value="INFV_NS1"/>
    <property type="match status" value="1"/>
</dbReference>
<dbReference type="InterPro" id="IPR004208">
    <property type="entry name" value="NS1"/>
</dbReference>
<dbReference type="InterPro" id="IPR000256">
    <property type="entry name" value="NS1A"/>
</dbReference>
<dbReference type="InterPro" id="IPR038064">
    <property type="entry name" value="NS1A_effect_dom-like_sf"/>
</dbReference>
<dbReference type="InterPro" id="IPR009068">
    <property type="entry name" value="uS15_NS1_RNA-bd_sf"/>
</dbReference>
<dbReference type="Pfam" id="PF00600">
    <property type="entry name" value="Flu_NS1"/>
    <property type="match status" value="1"/>
</dbReference>
<dbReference type="SUPFAM" id="SSF143021">
    <property type="entry name" value="Ns1 effector domain-like"/>
    <property type="match status" value="1"/>
</dbReference>
<dbReference type="SUPFAM" id="SSF47060">
    <property type="entry name" value="S15/NS1 RNA-binding domain"/>
    <property type="match status" value="1"/>
</dbReference>
<evidence type="ECO:0000255" key="1">
    <source>
        <dbReference type="HAMAP-Rule" id="MF_04066"/>
    </source>
</evidence>
<evidence type="ECO:0000256" key="2">
    <source>
        <dbReference type="SAM" id="MobiDB-lite"/>
    </source>
</evidence>
<protein>
    <recommendedName>
        <fullName evidence="1">Non-structural protein 1</fullName>
        <shortName evidence="1">NS1</shortName>
    </recommendedName>
    <alternativeName>
        <fullName evidence="1">NS1A</fullName>
    </alternativeName>
</protein>
<proteinExistence type="inferred from homology"/>
<organismHost>
    <name type="scientific">Aves</name>
    <dbReference type="NCBI Taxonomy" id="8782"/>
</organismHost>
<organismHost>
    <name type="scientific">Felis catus</name>
    <name type="common">Cat</name>
    <name type="synonym">Felis silvestris catus</name>
    <dbReference type="NCBI Taxonomy" id="9685"/>
</organismHost>
<organismHost>
    <name type="scientific">Homo sapiens</name>
    <name type="common">Human</name>
    <dbReference type="NCBI Taxonomy" id="9606"/>
</organismHost>
<organismHost>
    <name type="scientific">Panthera pardus</name>
    <name type="common">Leopard</name>
    <name type="synonym">Felis pardus</name>
    <dbReference type="NCBI Taxonomy" id="9691"/>
</organismHost>
<organismHost>
    <name type="scientific">Panthera tigris</name>
    <name type="common">Tiger</name>
    <dbReference type="NCBI Taxonomy" id="9694"/>
</organismHost>
<organismHost>
    <name type="scientific">Sus scrofa</name>
    <name type="common">Pig</name>
    <dbReference type="NCBI Taxonomy" id="9823"/>
</organismHost>
<comment type="function">
    <text evidence="1">Inhibits post-transcriptional processing of cellular pre-mRNA, by binding and inhibiting two cellular proteins that are required for the 3'-end processing of cellular pre-mRNAs: the 30 kDa cleavage and polyadenylation specificity factor/CPSF4 and the poly(A)-binding protein 2/PABPN1. In turn, unprocessed 3' end pre-mRNAs accumulate in the host nucleus and are no longer exported to the cytoplasm. Cellular protein synthesis is thereby shut off very early after virus infection. Viral protein synthesis is not affected by the inhibition of the cellular 3' end processing machinery because the poly(A) tails of viral mRNAs are produced by the viral polymerase through a stuttering mechanism. Prevents the establishment of the cellular antiviral state by inhibiting TRIM25-mediated RIGI ubiquitination, which normally triggers the antiviral transduction signal that leads to the activation of type I IFN genes by transcription factors IRF3 and IRF7. Also binds poly(A) and U6 snRNA. Inhibits the integrated stress response (ISR) in the infected cell by blocking dsRNA binding by EIF2AK2/PKR and further phosphorylation of EIF2S1/EIF-2ALPHA. Stress granule formation is thus inhibited, which allows protein synthesis and viral replication.</text>
</comment>
<comment type="subunit">
    <text evidence="1">Homodimer. Interacts with host TRIM25 (via coiled coil); this interaction specifically inhibits TRIM25 multimerization and TRIM25-mediated RIGI CARD ubiquitination. Interacts with human EIF2AK2/PKR, CPSF4, IVNS1ABP and PABPN1.</text>
</comment>
<comment type="subcellular location">
    <subcellularLocation>
        <location evidence="1">Host nucleus</location>
    </subcellularLocation>
    <subcellularLocation>
        <location evidence="1">Host cytoplasm</location>
    </subcellularLocation>
    <text evidence="1">In uninfected, transfected cells, NS1 is localized in the nucleus. Only in virus infected cells, the nuclear export signal is unveiled, presumably by a viral protein, and a fraction of NS1 is exported in the cytoplasm.</text>
</comment>
<comment type="alternative products">
    <event type="alternative splicing"/>
    <isoform>
        <id>Q6DP66-1</id>
        <name>NS1</name>
        <sequence type="displayed"/>
    </isoform>
    <isoform>
        <id>Q6DP67-1</id>
        <name>NEP</name>
        <name>NS2</name>
        <sequence type="external"/>
    </isoform>
</comment>
<comment type="domain">
    <text evidence="1">The dsRNA-binding region is required for suppression of RNA silencing.</text>
</comment>
<comment type="PTM">
    <text evidence="1">Upon interferon induction, ISGylated via host HERC5; this results in the impairment of NS1 interaction with RNA targets due to its inability to form homodimers and to interact with host EIF2AK2/PKR.</text>
</comment>
<comment type="similarity">
    <text evidence="1">Belongs to the influenza A viruses NS1 family.</text>
</comment>
<sequence>MDSNTVSSFQVDCFLWHVRKRFADQELGDAPFLDRLRRDQKSLRGRGSTLGLDIETATRAGKQIVERILEKESDEALKMTIASLPALRYLTDMTLEEMSRDWFMLMPKQKVAGSLCIRMDQAIMDKTIILKANFSVIFDRLETLILLRAFTEEGAIVGEISPLPSLPGHTDEDVKNAIGVLIGGLEWNDNTVRVSETLQRFAWRSSNEGGRPSLPPKQKRKMARTTESEV</sequence>
<accession>Q6DP66</accession>
<feature type="chain" id="PRO_0000311749" description="Non-structural protein 1">
    <location>
        <begin position="1"/>
        <end position="230"/>
    </location>
</feature>
<feature type="region of interest" description="RNA-binding and homodimerization" evidence="1">
    <location>
        <begin position="1"/>
        <end position="73"/>
    </location>
</feature>
<feature type="region of interest" description="CPSF4-binding" evidence="1">
    <location>
        <begin position="180"/>
        <end position="215"/>
    </location>
</feature>
<feature type="region of interest" description="Disordered" evidence="2">
    <location>
        <begin position="205"/>
        <end position="230"/>
    </location>
</feature>
<feature type="region of interest" description="PABPN1-binding" evidence="1">
    <location>
        <begin position="223"/>
        <end position="230"/>
    </location>
</feature>
<feature type="short sequence motif" description="Nuclear localization signal" evidence="1">
    <location>
        <begin position="34"/>
        <end position="38"/>
    </location>
</feature>
<feature type="short sequence motif" description="Nuclear export signal" evidence="1">
    <location>
        <begin position="137"/>
        <end position="146"/>
    </location>
</feature>
<reference key="1">
    <citation type="journal article" date="2004" name="Nature">
        <title>Genesis of a highly pathogenic and potentially pandemic H5N1 influenza virus in eastern Asia.</title>
        <authorList>
            <person name="Li K.S."/>
            <person name="Guan Y."/>
            <person name="Wang J."/>
            <person name="Smith G.J.D."/>
            <person name="Xu K.M."/>
            <person name="Duan L."/>
            <person name="Rahardjo A.P."/>
            <person name="Puthavathana P."/>
            <person name="Buranathai C."/>
            <person name="Nguyen T.D."/>
            <person name="Estoepangestie A.T.S."/>
            <person name="Chaisingh A."/>
            <person name="Auewarakul P."/>
            <person name="Long H.T."/>
            <person name="Hanh N.T.H."/>
            <person name="Webby R.J."/>
            <person name="Poon L.L.M."/>
            <person name="Chen H."/>
            <person name="Shortridge K.F."/>
            <person name="Yuen K.Y."/>
            <person name="Webster R.G."/>
            <person name="Peiris J.S.M."/>
        </authorList>
    </citation>
    <scope>NUCLEOTIDE SEQUENCE [GENOMIC RNA]</scope>
</reference>
<organism>
    <name type="scientific">Influenza A virus (strain A/Chicken/Hong Kong/37.4/2002 H5N1 genotype X2)</name>
    <dbReference type="NCBI Taxonomy" id="284172"/>
    <lineage>
        <taxon>Viruses</taxon>
        <taxon>Riboviria</taxon>
        <taxon>Orthornavirae</taxon>
        <taxon>Negarnaviricota</taxon>
        <taxon>Polyploviricotina</taxon>
        <taxon>Insthoviricetes</taxon>
        <taxon>Articulavirales</taxon>
        <taxon>Orthomyxoviridae</taxon>
        <taxon>Alphainfluenzavirus</taxon>
        <taxon>Alphainfluenzavirus influenzae</taxon>
        <taxon>Influenza A virus</taxon>
    </lineage>
</organism>
<name>NS1_I02A3</name>
<keyword id="KW-0025">Alternative splicing</keyword>
<keyword id="KW-1262">Eukaryotic host gene expression shutoff by virus</keyword>
<keyword id="KW-1035">Host cytoplasm</keyword>
<keyword id="KW-1190">Host gene expression shutoff by virus</keyword>
<keyword id="KW-1192">Host mRNA suppression by virus</keyword>
<keyword id="KW-1048">Host nucleus</keyword>
<keyword id="KW-0945">Host-virus interaction</keyword>
<keyword id="KW-1090">Inhibition of host innate immune response by virus</keyword>
<keyword id="KW-1114">Inhibition of host interferon signaling pathway by virus</keyword>
<keyword id="KW-1102">Inhibition of host PKR by virus</keyword>
<keyword id="KW-1103">Inhibition of host pre-mRNA processing by virus</keyword>
<keyword id="KW-1088">Inhibition of host RIG-I by virus</keyword>
<keyword id="KW-1113">Inhibition of host RLR pathway by virus</keyword>
<keyword id="KW-0922">Interferon antiviral system evasion</keyword>
<keyword id="KW-0694">RNA-binding</keyword>
<keyword id="KW-0832">Ubl conjugation</keyword>
<keyword id="KW-0899">Viral immunoevasion</keyword>
<gene>
    <name evidence="1" type="primary">NS</name>
</gene>